<organism>
    <name type="scientific">Burkholderia multivorans (strain ATCC 17616 / 249)</name>
    <dbReference type="NCBI Taxonomy" id="395019"/>
    <lineage>
        <taxon>Bacteria</taxon>
        <taxon>Pseudomonadati</taxon>
        <taxon>Pseudomonadota</taxon>
        <taxon>Betaproteobacteria</taxon>
        <taxon>Burkholderiales</taxon>
        <taxon>Burkholderiaceae</taxon>
        <taxon>Burkholderia</taxon>
        <taxon>Burkholderia cepacia complex</taxon>
    </lineage>
</organism>
<evidence type="ECO:0000255" key="1">
    <source>
        <dbReference type="HAMAP-Rule" id="MF_00679"/>
    </source>
</evidence>
<reference key="1">
    <citation type="submission" date="2007-10" db="EMBL/GenBank/DDBJ databases">
        <title>Complete sequence of chromosome 1 of Burkholderia multivorans ATCC 17616.</title>
        <authorList>
            <person name="Copeland A."/>
            <person name="Lucas S."/>
            <person name="Lapidus A."/>
            <person name="Barry K."/>
            <person name="Glavina del Rio T."/>
            <person name="Dalin E."/>
            <person name="Tice H."/>
            <person name="Pitluck S."/>
            <person name="Chain P."/>
            <person name="Malfatti S."/>
            <person name="Shin M."/>
            <person name="Vergez L."/>
            <person name="Schmutz J."/>
            <person name="Larimer F."/>
            <person name="Land M."/>
            <person name="Hauser L."/>
            <person name="Kyrpides N."/>
            <person name="Kim E."/>
            <person name="Tiedje J."/>
            <person name="Richardson P."/>
        </authorList>
    </citation>
    <scope>NUCLEOTIDE SEQUENCE [LARGE SCALE GENOMIC DNA]</scope>
    <source>
        <strain>ATCC 17616 / 249</strain>
    </source>
</reference>
<reference key="2">
    <citation type="submission" date="2007-04" db="EMBL/GenBank/DDBJ databases">
        <title>Complete genome sequence of Burkholderia multivorans ATCC 17616.</title>
        <authorList>
            <person name="Ohtsubo Y."/>
            <person name="Yamashita A."/>
            <person name="Kurokawa K."/>
            <person name="Takami H."/>
            <person name="Yuhara S."/>
            <person name="Nishiyama E."/>
            <person name="Endo R."/>
            <person name="Miyazaki R."/>
            <person name="Ono A."/>
            <person name="Yano K."/>
            <person name="Ito M."/>
            <person name="Sota M."/>
            <person name="Yuji N."/>
            <person name="Hattori M."/>
            <person name="Tsuda M."/>
        </authorList>
    </citation>
    <scope>NUCLEOTIDE SEQUENCE [LARGE SCALE GENOMIC DNA]</scope>
    <source>
        <strain>ATCC 17616 / 249</strain>
    </source>
</reference>
<gene>
    <name evidence="1" type="primary">hscA</name>
    <name type="ordered locus">Bmul_1148</name>
    <name type="ordered locus">BMULJ_02106</name>
</gene>
<accession>A9AGU7</accession>
<keyword id="KW-0067">ATP-binding</keyword>
<keyword id="KW-0143">Chaperone</keyword>
<keyword id="KW-0547">Nucleotide-binding</keyword>
<keyword id="KW-1185">Reference proteome</keyword>
<comment type="function">
    <text evidence="1">Chaperone involved in the maturation of iron-sulfur cluster-containing proteins. Has a low intrinsic ATPase activity which is markedly stimulated by HscB.</text>
</comment>
<comment type="similarity">
    <text evidence="1">Belongs to the heat shock protein 70 family.</text>
</comment>
<feature type="chain" id="PRO_1000131669" description="Chaperone protein HscA homolog">
    <location>
        <begin position="1"/>
        <end position="622"/>
    </location>
</feature>
<proteinExistence type="inferred from homology"/>
<name>HSCA_BURM1</name>
<protein>
    <recommendedName>
        <fullName evidence="1">Chaperone protein HscA homolog</fullName>
    </recommendedName>
</protein>
<dbReference type="EMBL" id="CP000868">
    <property type="protein sequence ID" value="ABX14838.1"/>
    <property type="molecule type" value="Genomic_DNA"/>
</dbReference>
<dbReference type="EMBL" id="AP009385">
    <property type="protein sequence ID" value="BAG44013.1"/>
    <property type="molecule type" value="Genomic_DNA"/>
</dbReference>
<dbReference type="RefSeq" id="WP_012213078.1">
    <property type="nucleotide sequence ID" value="NC_010084.1"/>
</dbReference>
<dbReference type="SMR" id="A9AGU7"/>
<dbReference type="STRING" id="395019.BMULJ_02106"/>
<dbReference type="KEGG" id="bmj:BMULJ_02106"/>
<dbReference type="KEGG" id="bmu:Bmul_1148"/>
<dbReference type="eggNOG" id="COG0443">
    <property type="taxonomic scope" value="Bacteria"/>
</dbReference>
<dbReference type="HOGENOM" id="CLU_005965_2_1_4"/>
<dbReference type="Proteomes" id="UP000008815">
    <property type="component" value="Chromosome 1"/>
</dbReference>
<dbReference type="GO" id="GO:0005524">
    <property type="term" value="F:ATP binding"/>
    <property type="evidence" value="ECO:0007669"/>
    <property type="project" value="UniProtKB-KW"/>
</dbReference>
<dbReference type="GO" id="GO:0016887">
    <property type="term" value="F:ATP hydrolysis activity"/>
    <property type="evidence" value="ECO:0007669"/>
    <property type="project" value="UniProtKB-UniRule"/>
</dbReference>
<dbReference type="GO" id="GO:0140662">
    <property type="term" value="F:ATP-dependent protein folding chaperone"/>
    <property type="evidence" value="ECO:0007669"/>
    <property type="project" value="InterPro"/>
</dbReference>
<dbReference type="GO" id="GO:0051082">
    <property type="term" value="F:unfolded protein binding"/>
    <property type="evidence" value="ECO:0007669"/>
    <property type="project" value="InterPro"/>
</dbReference>
<dbReference type="GO" id="GO:0016226">
    <property type="term" value="P:iron-sulfur cluster assembly"/>
    <property type="evidence" value="ECO:0007669"/>
    <property type="project" value="InterPro"/>
</dbReference>
<dbReference type="CDD" id="cd10236">
    <property type="entry name" value="ASKHA_NBD_HSP70_HscA"/>
    <property type="match status" value="1"/>
</dbReference>
<dbReference type="FunFam" id="3.30.420.40:FF:000046">
    <property type="entry name" value="Chaperone protein HscA"/>
    <property type="match status" value="1"/>
</dbReference>
<dbReference type="FunFam" id="2.60.34.10:FF:000005">
    <property type="entry name" value="Chaperone protein HscA homolog"/>
    <property type="match status" value="1"/>
</dbReference>
<dbReference type="Gene3D" id="1.20.1270.10">
    <property type="match status" value="1"/>
</dbReference>
<dbReference type="Gene3D" id="3.30.420.40">
    <property type="match status" value="2"/>
</dbReference>
<dbReference type="Gene3D" id="3.90.640.10">
    <property type="entry name" value="Actin, Chain A, domain 4"/>
    <property type="match status" value="1"/>
</dbReference>
<dbReference type="Gene3D" id="2.60.34.10">
    <property type="entry name" value="Substrate Binding Domain Of DNAk, Chain A, domain 1"/>
    <property type="match status" value="1"/>
</dbReference>
<dbReference type="HAMAP" id="MF_00679">
    <property type="entry name" value="HscA"/>
    <property type="match status" value="1"/>
</dbReference>
<dbReference type="InterPro" id="IPR043129">
    <property type="entry name" value="ATPase_NBD"/>
</dbReference>
<dbReference type="InterPro" id="IPR018181">
    <property type="entry name" value="Heat_shock_70_CS"/>
</dbReference>
<dbReference type="InterPro" id="IPR042039">
    <property type="entry name" value="HscA_NBD"/>
</dbReference>
<dbReference type="InterPro" id="IPR029048">
    <property type="entry name" value="HSP70_C_sf"/>
</dbReference>
<dbReference type="InterPro" id="IPR029047">
    <property type="entry name" value="HSP70_peptide-bd_sf"/>
</dbReference>
<dbReference type="InterPro" id="IPR013126">
    <property type="entry name" value="Hsp_70_fam"/>
</dbReference>
<dbReference type="InterPro" id="IPR010236">
    <property type="entry name" value="ISC_FeS_clus_asmbl_HscA"/>
</dbReference>
<dbReference type="NCBIfam" id="TIGR01991">
    <property type="entry name" value="HscA"/>
    <property type="match status" value="1"/>
</dbReference>
<dbReference type="NCBIfam" id="NF003520">
    <property type="entry name" value="PRK05183.1"/>
    <property type="match status" value="1"/>
</dbReference>
<dbReference type="PANTHER" id="PTHR19375">
    <property type="entry name" value="HEAT SHOCK PROTEIN 70KDA"/>
    <property type="match status" value="1"/>
</dbReference>
<dbReference type="Pfam" id="PF00012">
    <property type="entry name" value="HSP70"/>
    <property type="match status" value="1"/>
</dbReference>
<dbReference type="PRINTS" id="PR00301">
    <property type="entry name" value="HEATSHOCK70"/>
</dbReference>
<dbReference type="SUPFAM" id="SSF53067">
    <property type="entry name" value="Actin-like ATPase domain"/>
    <property type="match status" value="2"/>
</dbReference>
<dbReference type="SUPFAM" id="SSF100934">
    <property type="entry name" value="Heat shock protein 70kD (HSP70), C-terminal subdomain"/>
    <property type="match status" value="1"/>
</dbReference>
<dbReference type="SUPFAM" id="SSF100920">
    <property type="entry name" value="Heat shock protein 70kD (HSP70), peptide-binding domain"/>
    <property type="match status" value="1"/>
</dbReference>
<dbReference type="PROSITE" id="PS00297">
    <property type="entry name" value="HSP70_1"/>
    <property type="match status" value="1"/>
</dbReference>
<dbReference type="PROSITE" id="PS00329">
    <property type="entry name" value="HSP70_2"/>
    <property type="match status" value="1"/>
</dbReference>
<dbReference type="PROSITE" id="PS01036">
    <property type="entry name" value="HSP70_3"/>
    <property type="match status" value="1"/>
</dbReference>
<sequence length="622" mass="66020">MALLQISEPGMAPAPHQRRLAVGIDLGTTNSLVAAVRNSVPEVLPDDAGRVLLPSVVRYLENGGRRIGHDAKAQAATDPRNTIVSVKRFMGRGKAEVEGAANAPYEFVDAPGMVQIRTVDGVKSPVEVSAEILATLRQRAEDTLGDELVGAVITVPAYFDDAQRQATKDAARLAGLNVLRLLNEPTAAAIAYGLDNAAEGLYAVYDLGGGTFDLSILKLTKGVFEVLAAGGDSALGGDDFDHALFDHVLAQAGLDAKTLAPEDVRLLLDRVRVLKEALSSAPEAALDVTLSNGAHLAQTISHDTFATLVEPLVQRTLTPTRKALRDAQVTPADIKGVVLVGGATRMPVIREAVAKYFGQPPLVNLDPDQVVALGAAIQADLLAGNRGSGDDWLLLDVIPLSLGVETMGGLVEKIIPRNSTIPIARAQEFTTFKDGQTAMAIHVVQGERELVADCRSLARFELRGIPPMTAGAARIRVTYQVDADGLLSVFAREQHSGVEASVVVKPSYGLADDDIAKMLEDSFKTAEVDMRARALREAQVEAERMIEATQAALAADGELLDAVERAEIDARVAALRTIAQGDDADAIEAATKALADGTDEFAARRMDKSIKRALSGRRLDEI</sequence>